<organism>
    <name type="scientific">Mesorhizobium japonicum (strain LMG 29417 / CECT 9101 / MAFF 303099)</name>
    <name type="common">Mesorhizobium loti (strain MAFF 303099)</name>
    <dbReference type="NCBI Taxonomy" id="266835"/>
    <lineage>
        <taxon>Bacteria</taxon>
        <taxon>Pseudomonadati</taxon>
        <taxon>Pseudomonadota</taxon>
        <taxon>Alphaproteobacteria</taxon>
        <taxon>Hyphomicrobiales</taxon>
        <taxon>Phyllobacteriaceae</taxon>
        <taxon>Mesorhizobium</taxon>
    </lineage>
</organism>
<comment type="function">
    <text evidence="1">Catalyzes the attachment of tyrosine to tRNA(Tyr) in a two-step reaction: tyrosine is first activated by ATP to form Tyr-AMP and then transferred to the acceptor end of tRNA(Tyr).</text>
</comment>
<comment type="catalytic activity">
    <reaction evidence="1">
        <text>tRNA(Tyr) + L-tyrosine + ATP = L-tyrosyl-tRNA(Tyr) + AMP + diphosphate + H(+)</text>
        <dbReference type="Rhea" id="RHEA:10220"/>
        <dbReference type="Rhea" id="RHEA-COMP:9706"/>
        <dbReference type="Rhea" id="RHEA-COMP:9707"/>
        <dbReference type="ChEBI" id="CHEBI:15378"/>
        <dbReference type="ChEBI" id="CHEBI:30616"/>
        <dbReference type="ChEBI" id="CHEBI:33019"/>
        <dbReference type="ChEBI" id="CHEBI:58315"/>
        <dbReference type="ChEBI" id="CHEBI:78442"/>
        <dbReference type="ChEBI" id="CHEBI:78536"/>
        <dbReference type="ChEBI" id="CHEBI:456215"/>
        <dbReference type="EC" id="6.1.1.1"/>
    </reaction>
</comment>
<comment type="subunit">
    <text evidence="1">Homodimer.</text>
</comment>
<comment type="subcellular location">
    <subcellularLocation>
        <location evidence="1">Cytoplasm</location>
    </subcellularLocation>
</comment>
<comment type="similarity">
    <text evidence="1">Belongs to the class-I aminoacyl-tRNA synthetase family. TyrS type 1 subfamily.</text>
</comment>
<feature type="chain" id="PRO_0000234754" description="Tyrosine--tRNA ligase">
    <location>
        <begin position="1"/>
        <end position="417"/>
    </location>
</feature>
<feature type="domain" description="S4 RNA-binding" evidence="1">
    <location>
        <begin position="350"/>
        <end position="416"/>
    </location>
</feature>
<feature type="short sequence motif" description="'HIGH' region">
    <location>
        <begin position="44"/>
        <end position="53"/>
    </location>
</feature>
<feature type="short sequence motif" description="'KMSKS' region">
    <location>
        <begin position="236"/>
        <end position="240"/>
    </location>
</feature>
<feature type="binding site" evidence="1">
    <location>
        <position position="39"/>
    </location>
    <ligand>
        <name>L-tyrosine</name>
        <dbReference type="ChEBI" id="CHEBI:58315"/>
    </ligand>
</feature>
<feature type="binding site" evidence="1">
    <location>
        <position position="176"/>
    </location>
    <ligand>
        <name>L-tyrosine</name>
        <dbReference type="ChEBI" id="CHEBI:58315"/>
    </ligand>
</feature>
<feature type="binding site" evidence="1">
    <location>
        <position position="180"/>
    </location>
    <ligand>
        <name>L-tyrosine</name>
        <dbReference type="ChEBI" id="CHEBI:58315"/>
    </ligand>
</feature>
<feature type="binding site" evidence="1">
    <location>
        <position position="239"/>
    </location>
    <ligand>
        <name>ATP</name>
        <dbReference type="ChEBI" id="CHEBI:30616"/>
    </ligand>
</feature>
<proteinExistence type="inferred from homology"/>
<reference key="1">
    <citation type="journal article" date="2000" name="DNA Res.">
        <title>Complete genome structure of the nitrogen-fixing symbiotic bacterium Mesorhizobium loti.</title>
        <authorList>
            <person name="Kaneko T."/>
            <person name="Nakamura Y."/>
            <person name="Sato S."/>
            <person name="Asamizu E."/>
            <person name="Kato T."/>
            <person name="Sasamoto S."/>
            <person name="Watanabe A."/>
            <person name="Idesawa K."/>
            <person name="Ishikawa A."/>
            <person name="Kawashima K."/>
            <person name="Kimura T."/>
            <person name="Kishida Y."/>
            <person name="Kiyokawa C."/>
            <person name="Kohara M."/>
            <person name="Matsumoto M."/>
            <person name="Matsuno A."/>
            <person name="Mochizuki Y."/>
            <person name="Nakayama S."/>
            <person name="Nakazaki N."/>
            <person name="Shimpo S."/>
            <person name="Sugimoto M."/>
            <person name="Takeuchi C."/>
            <person name="Yamada M."/>
            <person name="Tabata S."/>
        </authorList>
    </citation>
    <scope>NUCLEOTIDE SEQUENCE [LARGE SCALE GENOMIC DNA]</scope>
    <source>
        <strain>LMG 29417 / CECT 9101 / MAFF 303099</strain>
    </source>
</reference>
<name>SYY_RHILO</name>
<accession>Q98NS5</accession>
<protein>
    <recommendedName>
        <fullName evidence="1">Tyrosine--tRNA ligase</fullName>
        <ecNumber evidence="1">6.1.1.1</ecNumber>
    </recommendedName>
    <alternativeName>
        <fullName evidence="1">Tyrosyl-tRNA synthetase</fullName>
        <shortName evidence="1">TyrRS</shortName>
    </alternativeName>
</protein>
<keyword id="KW-0030">Aminoacyl-tRNA synthetase</keyword>
<keyword id="KW-0067">ATP-binding</keyword>
<keyword id="KW-0963">Cytoplasm</keyword>
<keyword id="KW-0436">Ligase</keyword>
<keyword id="KW-0547">Nucleotide-binding</keyword>
<keyword id="KW-0648">Protein biosynthesis</keyword>
<keyword id="KW-0694">RNA-binding</keyword>
<evidence type="ECO:0000255" key="1">
    <source>
        <dbReference type="HAMAP-Rule" id="MF_02006"/>
    </source>
</evidence>
<dbReference type="EC" id="6.1.1.1" evidence="1"/>
<dbReference type="EMBL" id="BA000012">
    <property type="protein sequence ID" value="BAB47686.1"/>
    <property type="molecule type" value="Genomic_DNA"/>
</dbReference>
<dbReference type="RefSeq" id="WP_010909056.1">
    <property type="nucleotide sequence ID" value="NC_002678.2"/>
</dbReference>
<dbReference type="SMR" id="Q98NS5"/>
<dbReference type="KEGG" id="mlo:mll0007"/>
<dbReference type="PATRIC" id="fig|266835.9.peg.5"/>
<dbReference type="eggNOG" id="COG0162">
    <property type="taxonomic scope" value="Bacteria"/>
</dbReference>
<dbReference type="HOGENOM" id="CLU_024003_0_3_5"/>
<dbReference type="Proteomes" id="UP000000552">
    <property type="component" value="Chromosome"/>
</dbReference>
<dbReference type="GO" id="GO:0005829">
    <property type="term" value="C:cytosol"/>
    <property type="evidence" value="ECO:0007669"/>
    <property type="project" value="TreeGrafter"/>
</dbReference>
<dbReference type="GO" id="GO:0005524">
    <property type="term" value="F:ATP binding"/>
    <property type="evidence" value="ECO:0007669"/>
    <property type="project" value="UniProtKB-UniRule"/>
</dbReference>
<dbReference type="GO" id="GO:0003723">
    <property type="term" value="F:RNA binding"/>
    <property type="evidence" value="ECO:0007669"/>
    <property type="project" value="UniProtKB-KW"/>
</dbReference>
<dbReference type="GO" id="GO:0004831">
    <property type="term" value="F:tyrosine-tRNA ligase activity"/>
    <property type="evidence" value="ECO:0007669"/>
    <property type="project" value="UniProtKB-UniRule"/>
</dbReference>
<dbReference type="GO" id="GO:0006437">
    <property type="term" value="P:tyrosyl-tRNA aminoacylation"/>
    <property type="evidence" value="ECO:0007669"/>
    <property type="project" value="UniProtKB-UniRule"/>
</dbReference>
<dbReference type="CDD" id="cd00165">
    <property type="entry name" value="S4"/>
    <property type="match status" value="1"/>
</dbReference>
<dbReference type="CDD" id="cd00805">
    <property type="entry name" value="TyrRS_core"/>
    <property type="match status" value="1"/>
</dbReference>
<dbReference type="FunFam" id="1.10.240.10:FF:000001">
    <property type="entry name" value="Tyrosine--tRNA ligase"/>
    <property type="match status" value="1"/>
</dbReference>
<dbReference type="FunFam" id="3.40.50.620:FF:000008">
    <property type="entry name" value="Tyrosine--tRNA ligase"/>
    <property type="match status" value="1"/>
</dbReference>
<dbReference type="Gene3D" id="3.40.50.620">
    <property type="entry name" value="HUPs"/>
    <property type="match status" value="1"/>
</dbReference>
<dbReference type="Gene3D" id="3.10.290.10">
    <property type="entry name" value="RNA-binding S4 domain"/>
    <property type="match status" value="1"/>
</dbReference>
<dbReference type="Gene3D" id="1.10.240.10">
    <property type="entry name" value="Tyrosyl-Transfer RNA Synthetase"/>
    <property type="match status" value="1"/>
</dbReference>
<dbReference type="HAMAP" id="MF_02006">
    <property type="entry name" value="Tyr_tRNA_synth_type1"/>
    <property type="match status" value="1"/>
</dbReference>
<dbReference type="InterPro" id="IPR002305">
    <property type="entry name" value="aa-tRNA-synth_Ic"/>
</dbReference>
<dbReference type="InterPro" id="IPR014729">
    <property type="entry name" value="Rossmann-like_a/b/a_fold"/>
</dbReference>
<dbReference type="InterPro" id="IPR036986">
    <property type="entry name" value="S4_RNA-bd_sf"/>
</dbReference>
<dbReference type="InterPro" id="IPR054608">
    <property type="entry name" value="SYY-like_C"/>
</dbReference>
<dbReference type="InterPro" id="IPR002307">
    <property type="entry name" value="Tyr-tRNA-ligase"/>
</dbReference>
<dbReference type="InterPro" id="IPR024088">
    <property type="entry name" value="Tyr-tRNA-ligase_bac-type"/>
</dbReference>
<dbReference type="InterPro" id="IPR024107">
    <property type="entry name" value="Tyr-tRNA-ligase_bac_1"/>
</dbReference>
<dbReference type="NCBIfam" id="TIGR00234">
    <property type="entry name" value="tyrS"/>
    <property type="match status" value="1"/>
</dbReference>
<dbReference type="PANTHER" id="PTHR11766:SF0">
    <property type="entry name" value="TYROSINE--TRNA LIGASE, MITOCHONDRIAL"/>
    <property type="match status" value="1"/>
</dbReference>
<dbReference type="PANTHER" id="PTHR11766">
    <property type="entry name" value="TYROSYL-TRNA SYNTHETASE"/>
    <property type="match status" value="1"/>
</dbReference>
<dbReference type="Pfam" id="PF22421">
    <property type="entry name" value="SYY_C-terminal"/>
    <property type="match status" value="1"/>
</dbReference>
<dbReference type="Pfam" id="PF00579">
    <property type="entry name" value="tRNA-synt_1b"/>
    <property type="match status" value="1"/>
</dbReference>
<dbReference type="PRINTS" id="PR01040">
    <property type="entry name" value="TRNASYNTHTYR"/>
</dbReference>
<dbReference type="SUPFAM" id="SSF55174">
    <property type="entry name" value="Alpha-L RNA-binding motif"/>
    <property type="match status" value="1"/>
</dbReference>
<dbReference type="SUPFAM" id="SSF52374">
    <property type="entry name" value="Nucleotidylyl transferase"/>
    <property type="match status" value="1"/>
</dbReference>
<dbReference type="PROSITE" id="PS50889">
    <property type="entry name" value="S4"/>
    <property type="match status" value="1"/>
</dbReference>
<gene>
    <name evidence="1" type="primary">tyrS</name>
    <name type="ordered locus">mll0007</name>
</gene>
<sequence length="417" mass="46133">MPAFKSDFLRTMSERGFIHQISDETGLDQLFAKETVTAYVGYDATATSLHIGNLISATMLYWLQETGHRPIALMGGGTSMIGDPSFRDDQRSLLTPEAIATNIEGIKRIFGRILRFGDGPNDAIMVNNADWLMKLNYVEFLRDVGRHFSVNRMLTFDSVKLRLDREQSLSFLEFNYMILQGYDFVELARRQNCRLQMGGSDQWGNIINGVDLGHRMGTPQLYALTTPLLTTSSGAKMGKSAKGAVWLNGDLFSPYDFWQYWRNTEDADVERFLKIFTRLPLPEIARLAALGGSEINEAKKILATETTAIVHGREAANQAEETARKTFEEGALADTLPTVGADKAALEAGIGILSLLVTAGLASSNGEARRHIQGGAVRINDQSVSDDRRMVTLQDLSPENVVKLSLGKKKHVLVRPA</sequence>